<proteinExistence type="inferred from homology"/>
<sequence>MTETSPPPVLDTAQARVLGCLIEKEATTPDAYPLTVNAAQVAANQKTAREPVLNLQTGVVHHALRQLETLGLVRQQFSSRAERYEHRLGSVLDLTRQQVALIGLLLLRGAQTLGELYARSERLARFNDADDMRHHLDRLIQRGLAAQLPRASGQREDRYAHLLSGELDVEALQAAAARAAPSARSGSDTSDLEARMQALEATVVELQEALAAVQARLDAAGA</sequence>
<name>Y4278_XANAC</name>
<dbReference type="EMBL" id="AE008923">
    <property type="protein sequence ID" value="AAM39113.1"/>
    <property type="molecule type" value="Genomic_DNA"/>
</dbReference>
<dbReference type="RefSeq" id="WP_003485105.1">
    <property type="nucleotide sequence ID" value="NC_003919.1"/>
</dbReference>
<dbReference type="SMR" id="Q8PER2"/>
<dbReference type="KEGG" id="xac:XAC4278"/>
<dbReference type="eggNOG" id="COG3132">
    <property type="taxonomic scope" value="Bacteria"/>
</dbReference>
<dbReference type="HOGENOM" id="CLU_057831_2_0_6"/>
<dbReference type="Proteomes" id="UP000000576">
    <property type="component" value="Chromosome"/>
</dbReference>
<dbReference type="Gene3D" id="1.10.10.10">
    <property type="entry name" value="Winged helix-like DNA-binding domain superfamily/Winged helix DNA-binding domain"/>
    <property type="match status" value="2"/>
</dbReference>
<dbReference type="HAMAP" id="MF_01584">
    <property type="entry name" value="UPF0502"/>
    <property type="match status" value="1"/>
</dbReference>
<dbReference type="InterPro" id="IPR007432">
    <property type="entry name" value="DUF480"/>
</dbReference>
<dbReference type="InterPro" id="IPR036388">
    <property type="entry name" value="WH-like_DNA-bd_sf"/>
</dbReference>
<dbReference type="InterPro" id="IPR036390">
    <property type="entry name" value="WH_DNA-bd_sf"/>
</dbReference>
<dbReference type="PANTHER" id="PTHR38768">
    <property type="entry name" value="UPF0502 PROTEIN YCEH"/>
    <property type="match status" value="1"/>
</dbReference>
<dbReference type="PANTHER" id="PTHR38768:SF1">
    <property type="entry name" value="UPF0502 PROTEIN YCEH"/>
    <property type="match status" value="1"/>
</dbReference>
<dbReference type="Pfam" id="PF04337">
    <property type="entry name" value="DUF480"/>
    <property type="match status" value="1"/>
</dbReference>
<dbReference type="SUPFAM" id="SSF46785">
    <property type="entry name" value="Winged helix' DNA-binding domain"/>
    <property type="match status" value="2"/>
</dbReference>
<reference key="1">
    <citation type="journal article" date="2002" name="Nature">
        <title>Comparison of the genomes of two Xanthomonas pathogens with differing host specificities.</title>
        <authorList>
            <person name="da Silva A.C.R."/>
            <person name="Ferro J.A."/>
            <person name="Reinach F.C."/>
            <person name="Farah C.S."/>
            <person name="Furlan L.R."/>
            <person name="Quaggio R.B."/>
            <person name="Monteiro-Vitorello C.B."/>
            <person name="Van Sluys M.A."/>
            <person name="Almeida N.F. Jr."/>
            <person name="Alves L.M.C."/>
            <person name="do Amaral A.M."/>
            <person name="Bertolini M.C."/>
            <person name="Camargo L.E.A."/>
            <person name="Camarotte G."/>
            <person name="Cannavan F."/>
            <person name="Cardozo J."/>
            <person name="Chambergo F."/>
            <person name="Ciapina L.P."/>
            <person name="Cicarelli R.M.B."/>
            <person name="Coutinho L.L."/>
            <person name="Cursino-Santos J.R."/>
            <person name="El-Dorry H."/>
            <person name="Faria J.B."/>
            <person name="Ferreira A.J.S."/>
            <person name="Ferreira R.C.C."/>
            <person name="Ferro M.I.T."/>
            <person name="Formighieri E.F."/>
            <person name="Franco M.C."/>
            <person name="Greggio C.C."/>
            <person name="Gruber A."/>
            <person name="Katsuyama A.M."/>
            <person name="Kishi L.T."/>
            <person name="Leite R.P."/>
            <person name="Lemos E.G.M."/>
            <person name="Lemos M.V.F."/>
            <person name="Locali E.C."/>
            <person name="Machado M.A."/>
            <person name="Madeira A.M.B.N."/>
            <person name="Martinez-Rossi N.M."/>
            <person name="Martins E.C."/>
            <person name="Meidanis J."/>
            <person name="Menck C.F.M."/>
            <person name="Miyaki C.Y."/>
            <person name="Moon D.H."/>
            <person name="Moreira L.M."/>
            <person name="Novo M.T.M."/>
            <person name="Okura V.K."/>
            <person name="Oliveira M.C."/>
            <person name="Oliveira V.R."/>
            <person name="Pereira H.A."/>
            <person name="Rossi A."/>
            <person name="Sena J.A.D."/>
            <person name="Silva C."/>
            <person name="de Souza R.F."/>
            <person name="Spinola L.A.F."/>
            <person name="Takita M.A."/>
            <person name="Tamura R.E."/>
            <person name="Teixeira E.C."/>
            <person name="Tezza R.I.D."/>
            <person name="Trindade dos Santos M."/>
            <person name="Truffi D."/>
            <person name="Tsai S.M."/>
            <person name="White F.F."/>
            <person name="Setubal J.C."/>
            <person name="Kitajima J.P."/>
        </authorList>
    </citation>
    <scope>NUCLEOTIDE SEQUENCE [LARGE SCALE GENOMIC DNA]</scope>
    <source>
        <strain>306</strain>
    </source>
</reference>
<feature type="chain" id="PRO_0000309444" description="UPF0502 protein XAC4278">
    <location>
        <begin position="1"/>
        <end position="222"/>
    </location>
</feature>
<comment type="similarity">
    <text evidence="1">Belongs to the UPF0502 family.</text>
</comment>
<protein>
    <recommendedName>
        <fullName evidence="1">UPF0502 protein XAC4278</fullName>
    </recommendedName>
</protein>
<organism>
    <name type="scientific">Xanthomonas axonopodis pv. citri (strain 306)</name>
    <dbReference type="NCBI Taxonomy" id="190486"/>
    <lineage>
        <taxon>Bacteria</taxon>
        <taxon>Pseudomonadati</taxon>
        <taxon>Pseudomonadota</taxon>
        <taxon>Gammaproteobacteria</taxon>
        <taxon>Lysobacterales</taxon>
        <taxon>Lysobacteraceae</taxon>
        <taxon>Xanthomonas</taxon>
    </lineage>
</organism>
<gene>
    <name type="ordered locus">XAC4278</name>
</gene>
<evidence type="ECO:0000255" key="1">
    <source>
        <dbReference type="HAMAP-Rule" id="MF_01584"/>
    </source>
</evidence>
<accession>Q8PER2</accession>